<reference key="1">
    <citation type="journal article" date="2002" name="Nature">
        <title>The genome sequence of Schizosaccharomyces pombe.</title>
        <authorList>
            <person name="Wood V."/>
            <person name="Gwilliam R."/>
            <person name="Rajandream M.A."/>
            <person name="Lyne M.H."/>
            <person name="Lyne R."/>
            <person name="Stewart A."/>
            <person name="Sgouros J.G."/>
            <person name="Peat N."/>
            <person name="Hayles J."/>
            <person name="Baker S.G."/>
            <person name="Basham D."/>
            <person name="Bowman S."/>
            <person name="Brooks K."/>
            <person name="Brown D."/>
            <person name="Brown S."/>
            <person name="Chillingworth T."/>
            <person name="Churcher C.M."/>
            <person name="Collins M."/>
            <person name="Connor R."/>
            <person name="Cronin A."/>
            <person name="Davis P."/>
            <person name="Feltwell T."/>
            <person name="Fraser A."/>
            <person name="Gentles S."/>
            <person name="Goble A."/>
            <person name="Hamlin N."/>
            <person name="Harris D.E."/>
            <person name="Hidalgo J."/>
            <person name="Hodgson G."/>
            <person name="Holroyd S."/>
            <person name="Hornsby T."/>
            <person name="Howarth S."/>
            <person name="Huckle E.J."/>
            <person name="Hunt S."/>
            <person name="Jagels K."/>
            <person name="James K.D."/>
            <person name="Jones L."/>
            <person name="Jones M."/>
            <person name="Leather S."/>
            <person name="McDonald S."/>
            <person name="McLean J."/>
            <person name="Mooney P."/>
            <person name="Moule S."/>
            <person name="Mungall K.L."/>
            <person name="Murphy L.D."/>
            <person name="Niblett D."/>
            <person name="Odell C."/>
            <person name="Oliver K."/>
            <person name="O'Neil S."/>
            <person name="Pearson D."/>
            <person name="Quail M.A."/>
            <person name="Rabbinowitsch E."/>
            <person name="Rutherford K.M."/>
            <person name="Rutter S."/>
            <person name="Saunders D."/>
            <person name="Seeger K."/>
            <person name="Sharp S."/>
            <person name="Skelton J."/>
            <person name="Simmonds M.N."/>
            <person name="Squares R."/>
            <person name="Squares S."/>
            <person name="Stevens K."/>
            <person name="Taylor K."/>
            <person name="Taylor R.G."/>
            <person name="Tivey A."/>
            <person name="Walsh S.V."/>
            <person name="Warren T."/>
            <person name="Whitehead S."/>
            <person name="Woodward J.R."/>
            <person name="Volckaert G."/>
            <person name="Aert R."/>
            <person name="Robben J."/>
            <person name="Grymonprez B."/>
            <person name="Weltjens I."/>
            <person name="Vanstreels E."/>
            <person name="Rieger M."/>
            <person name="Schaefer M."/>
            <person name="Mueller-Auer S."/>
            <person name="Gabel C."/>
            <person name="Fuchs M."/>
            <person name="Duesterhoeft A."/>
            <person name="Fritzc C."/>
            <person name="Holzer E."/>
            <person name="Moestl D."/>
            <person name="Hilbert H."/>
            <person name="Borzym K."/>
            <person name="Langer I."/>
            <person name="Beck A."/>
            <person name="Lehrach H."/>
            <person name="Reinhardt R."/>
            <person name="Pohl T.M."/>
            <person name="Eger P."/>
            <person name="Zimmermann W."/>
            <person name="Wedler H."/>
            <person name="Wambutt R."/>
            <person name="Purnelle B."/>
            <person name="Goffeau A."/>
            <person name="Cadieu E."/>
            <person name="Dreano S."/>
            <person name="Gloux S."/>
            <person name="Lelaure V."/>
            <person name="Mottier S."/>
            <person name="Galibert F."/>
            <person name="Aves S.J."/>
            <person name="Xiang Z."/>
            <person name="Hunt C."/>
            <person name="Moore K."/>
            <person name="Hurst S.M."/>
            <person name="Lucas M."/>
            <person name="Rochet M."/>
            <person name="Gaillardin C."/>
            <person name="Tallada V.A."/>
            <person name="Garzon A."/>
            <person name="Thode G."/>
            <person name="Daga R.R."/>
            <person name="Cruzado L."/>
            <person name="Jimenez J."/>
            <person name="Sanchez M."/>
            <person name="del Rey F."/>
            <person name="Benito J."/>
            <person name="Dominguez A."/>
            <person name="Revuelta J.L."/>
            <person name="Moreno S."/>
            <person name="Armstrong J."/>
            <person name="Forsburg S.L."/>
            <person name="Cerutti L."/>
            <person name="Lowe T."/>
            <person name="McCombie W.R."/>
            <person name="Paulsen I."/>
            <person name="Potashkin J."/>
            <person name="Shpakovski G.V."/>
            <person name="Ussery D."/>
            <person name="Barrell B.G."/>
            <person name="Nurse P."/>
        </authorList>
    </citation>
    <scope>NUCLEOTIDE SEQUENCE [LARGE SCALE GENOMIC DNA]</scope>
    <source>
        <strain>972 / ATCC 24843</strain>
    </source>
</reference>
<reference key="2">
    <citation type="journal article" date="2006" name="Nat. Biotechnol.">
        <title>ORFeome cloning and global analysis of protein localization in the fission yeast Schizosaccharomyces pombe.</title>
        <authorList>
            <person name="Matsuyama A."/>
            <person name="Arai R."/>
            <person name="Yashiroda Y."/>
            <person name="Shirai A."/>
            <person name="Kamata A."/>
            <person name="Sekido S."/>
            <person name="Kobayashi Y."/>
            <person name="Hashimoto A."/>
            <person name="Hamamoto M."/>
            <person name="Hiraoka Y."/>
            <person name="Horinouchi S."/>
            <person name="Yoshida M."/>
        </authorList>
    </citation>
    <scope>SUBCELLULAR LOCATION [LARGE SCALE ANALYSIS]</scope>
</reference>
<reference key="3">
    <citation type="journal article" date="2008" name="J. Proteome Res.">
        <title>Phosphoproteome analysis of fission yeast.</title>
        <authorList>
            <person name="Wilson-Grady J.T."/>
            <person name="Villen J."/>
            <person name="Gygi S.P."/>
        </authorList>
    </citation>
    <scope>PHOSPHORYLATION [LARGE SCALE ANALYSIS] AT SER-68</scope>
    <scope>IDENTIFICATION BY MASS SPECTROMETRY</scope>
</reference>
<comment type="subcellular location">
    <subcellularLocation>
        <location evidence="3">Cytoplasm</location>
    </subcellularLocation>
</comment>
<comment type="similarity">
    <text evidence="5">Belongs to the cytochrome b5 family.</text>
</comment>
<keyword id="KW-0963">Cytoplasm</keyword>
<keyword id="KW-0349">Heme</keyword>
<keyword id="KW-0408">Iron</keyword>
<keyword id="KW-0479">Metal-binding</keyword>
<keyword id="KW-0597">Phosphoprotein</keyword>
<keyword id="KW-1185">Reference proteome</keyword>
<sequence length="145" mass="16337">MLSIFKNLLGTSEEDGTTQEANSKDTKGLKEERKRKKRKNKYKIPPGHTQQDWDALVASGKNLSGVESPISVTAEELAKHCSPDDCWMAIRGKVYNVTAYLPYHPVGPKKILKHSGVDATKPYLKHHDWVNEEELLKTSFVGYLV</sequence>
<evidence type="ECO:0000255" key="1">
    <source>
        <dbReference type="PROSITE-ProRule" id="PRU00279"/>
    </source>
</evidence>
<evidence type="ECO:0000256" key="2">
    <source>
        <dbReference type="SAM" id="MobiDB-lite"/>
    </source>
</evidence>
<evidence type="ECO:0000269" key="3">
    <source>
    </source>
</evidence>
<evidence type="ECO:0000269" key="4">
    <source>
    </source>
</evidence>
<evidence type="ECO:0000305" key="5"/>
<dbReference type="EMBL" id="CU329672">
    <property type="protein sequence ID" value="CAA20908.1"/>
    <property type="molecule type" value="Genomic_DNA"/>
</dbReference>
<dbReference type="PIR" id="T41313">
    <property type="entry name" value="T41313"/>
</dbReference>
<dbReference type="RefSeq" id="NP_587703.1">
    <property type="nucleotide sequence ID" value="NM_001022698.2"/>
</dbReference>
<dbReference type="SMR" id="O74875"/>
<dbReference type="BioGRID" id="275392">
    <property type="interactions" value="19"/>
</dbReference>
<dbReference type="FunCoup" id="O74875">
    <property type="interactions" value="48"/>
</dbReference>
<dbReference type="STRING" id="284812.O74875"/>
<dbReference type="iPTMnet" id="O74875"/>
<dbReference type="PaxDb" id="4896-SPCC330.03c.1"/>
<dbReference type="EnsemblFungi" id="SPCC330.03c.1">
    <property type="protein sequence ID" value="SPCC330.03c.1:pep"/>
    <property type="gene ID" value="SPCC330.03c"/>
</dbReference>
<dbReference type="KEGG" id="spo:2538811"/>
<dbReference type="PomBase" id="SPCC330.03c"/>
<dbReference type="VEuPathDB" id="FungiDB:SPCC330.03c"/>
<dbReference type="eggNOG" id="KOG0536">
    <property type="taxonomic scope" value="Eukaryota"/>
</dbReference>
<dbReference type="HOGENOM" id="CLU_046313_2_3_1"/>
<dbReference type="InParanoid" id="O74875"/>
<dbReference type="OMA" id="CHLNDAW"/>
<dbReference type="PhylomeDB" id="O74875"/>
<dbReference type="PRO" id="PR:O74875"/>
<dbReference type="Proteomes" id="UP000002485">
    <property type="component" value="Chromosome III"/>
</dbReference>
<dbReference type="GO" id="GO:0005737">
    <property type="term" value="C:cytoplasm"/>
    <property type="evidence" value="ECO:0007005"/>
    <property type="project" value="PomBase"/>
</dbReference>
<dbReference type="GO" id="GO:0004128">
    <property type="term" value="F:cytochrome-b5 reductase activity, acting on NAD(P)H"/>
    <property type="evidence" value="ECO:0000318"/>
    <property type="project" value="GO_Central"/>
</dbReference>
<dbReference type="GO" id="GO:0020037">
    <property type="term" value="F:heme binding"/>
    <property type="evidence" value="ECO:0000318"/>
    <property type="project" value="GO_Central"/>
</dbReference>
<dbReference type="GO" id="GO:0046872">
    <property type="term" value="F:metal ion binding"/>
    <property type="evidence" value="ECO:0007669"/>
    <property type="project" value="UniProtKB-KW"/>
</dbReference>
<dbReference type="Gene3D" id="3.10.120.10">
    <property type="entry name" value="Cytochrome b5-like heme/steroid binding domain"/>
    <property type="match status" value="1"/>
</dbReference>
<dbReference type="InterPro" id="IPR001199">
    <property type="entry name" value="Cyt_B5-like_heme/steroid-bd"/>
</dbReference>
<dbReference type="InterPro" id="IPR036400">
    <property type="entry name" value="Cyt_B5-like_heme/steroid_sf"/>
</dbReference>
<dbReference type="InterPro" id="IPR051872">
    <property type="entry name" value="Cytochrome_b5/Flavoprotein_Rdt"/>
</dbReference>
<dbReference type="PANTHER" id="PTHR46237:SF1">
    <property type="entry name" value="CYTOCHROME B5 REDUCTASE 4"/>
    <property type="match status" value="1"/>
</dbReference>
<dbReference type="PANTHER" id="PTHR46237">
    <property type="entry name" value="CYTOCHROME B5 REDUCTASE 4 FAMILY MEMBER"/>
    <property type="match status" value="1"/>
</dbReference>
<dbReference type="Pfam" id="PF00173">
    <property type="entry name" value="Cyt-b5"/>
    <property type="match status" value="1"/>
</dbReference>
<dbReference type="SMART" id="SM01117">
    <property type="entry name" value="Cyt-b5"/>
    <property type="match status" value="1"/>
</dbReference>
<dbReference type="SUPFAM" id="SSF55856">
    <property type="entry name" value="Cytochrome b5-like heme/steroid binding domain"/>
    <property type="match status" value="1"/>
</dbReference>
<dbReference type="PROSITE" id="PS50255">
    <property type="entry name" value="CYTOCHROME_B5_2"/>
    <property type="match status" value="1"/>
</dbReference>
<organism>
    <name type="scientific">Schizosaccharomyces pombe (strain 972 / ATCC 24843)</name>
    <name type="common">Fission yeast</name>
    <dbReference type="NCBI Taxonomy" id="284812"/>
    <lineage>
        <taxon>Eukaryota</taxon>
        <taxon>Fungi</taxon>
        <taxon>Dikarya</taxon>
        <taxon>Ascomycota</taxon>
        <taxon>Taphrinomycotina</taxon>
        <taxon>Schizosaccharomycetes</taxon>
        <taxon>Schizosaccharomycetales</taxon>
        <taxon>Schizosaccharomycetaceae</taxon>
        <taxon>Schizosaccharomyces</taxon>
    </lineage>
</organism>
<accession>O74875</accession>
<protein>
    <recommendedName>
        <fullName>Uncharacterized heme-binding protein C330.03c</fullName>
    </recommendedName>
</protein>
<name>YJ83_SCHPO</name>
<feature type="chain" id="PRO_0000310346" description="Uncharacterized heme-binding protein C330.03c">
    <location>
        <begin position="1"/>
        <end position="145"/>
    </location>
</feature>
<feature type="domain" description="Cytochrome b5 heme-binding" evidence="1">
    <location>
        <begin position="69"/>
        <end position="145"/>
    </location>
</feature>
<feature type="region of interest" description="Disordered" evidence="2">
    <location>
        <begin position="1"/>
        <end position="49"/>
    </location>
</feature>
<feature type="compositionally biased region" description="Basic and acidic residues" evidence="2">
    <location>
        <begin position="22"/>
        <end position="32"/>
    </location>
</feature>
<feature type="compositionally biased region" description="Basic residues" evidence="2">
    <location>
        <begin position="33"/>
        <end position="42"/>
    </location>
</feature>
<feature type="binding site" description="axial binding residue" evidence="1">
    <location>
        <position position="104"/>
    </location>
    <ligand>
        <name>heme</name>
        <dbReference type="ChEBI" id="CHEBI:30413"/>
    </ligand>
    <ligandPart>
        <name>Fe</name>
        <dbReference type="ChEBI" id="CHEBI:18248"/>
    </ligandPart>
</feature>
<feature type="binding site" description="axial binding residue" evidence="1">
    <location>
        <position position="127"/>
    </location>
    <ligand>
        <name>heme</name>
        <dbReference type="ChEBI" id="CHEBI:30413"/>
    </ligand>
    <ligandPart>
        <name>Fe</name>
        <dbReference type="ChEBI" id="CHEBI:18248"/>
    </ligandPart>
</feature>
<feature type="modified residue" description="Phosphoserine" evidence="4">
    <location>
        <position position="68"/>
    </location>
</feature>
<gene>
    <name type="ORF">SPCC330.03c</name>
</gene>
<proteinExistence type="evidence at protein level"/>